<accession>H2KZB2</accession>
<accession>Q5W7E5</accession>
<sequence length="603" mass="67054">MGRKSAILAVILAIIYFRSNFSKMSNTPVQETEGPVYVAYSMEDMLKSPRDLYKSVKEVAKFVNSAEGKSMSARFKKFGTPREAMDFLAYGDAPTTPKTVPPVAPTEPNSPFSGVNRIQMNEFKKYVEKGDMENFLRLVDSNPRFLVNTGGDVASIVMEGFRYNALHIAAKAGQTEIIAKILELIQNIDFLIRLYGTGADDVTLRKINILDSYLNTPDKGNSDTPLHFASKFGKIGVVRVLTENSATDRTLLNKSGKSALDCAGERYTGEDKDMVQRDIHLAIEGFYVFLHRNPTTGSTQLTVSQKPPATYSTSPTTATVTVSAQAGPFFTEREARDFAKSWQTAGKELKRTDFDKGWERVGRVLAEQSEAMWRETWHFLGSMELLDLGSEQGLGVLEAFLREKRRGNLRNSEISEISTKKSIFRRGIHARKLDFGILDGEKSAEISENLTPDGSDSADDEDDDDIFYDTFSEIPAAAEKSINDPDDTLGSLTDRFAAISIFSPLPPPPPPQWSNSPNFDYSEGEDSFATPPTTPPPTFVADDEPCKIDNDLFEVLAQISSELISKFPLTQDYVQKLGKLTAHDRSTWRPIDSPARCDSRRKI</sequence>
<keyword id="KW-0025">Alternative splicing</keyword>
<keyword id="KW-0040">ANK repeat</keyword>
<keyword id="KW-0131">Cell cycle</keyword>
<keyword id="KW-0132">Cell division</keyword>
<keyword id="KW-0472">Membrane</keyword>
<keyword id="KW-0498">Mitosis</keyword>
<keyword id="KW-0539">Nucleus</keyword>
<keyword id="KW-1185">Reference proteome</keyword>
<keyword id="KW-0677">Repeat</keyword>
<keyword id="KW-0812">Transmembrane</keyword>
<keyword id="KW-1133">Transmembrane helix</keyword>
<organism>
    <name type="scientific">Caenorhabditis elegans</name>
    <dbReference type="NCBI Taxonomy" id="6239"/>
    <lineage>
        <taxon>Eukaryota</taxon>
        <taxon>Metazoa</taxon>
        <taxon>Ecdysozoa</taxon>
        <taxon>Nematoda</taxon>
        <taxon>Chromadorea</taxon>
        <taxon>Rhabditida</taxon>
        <taxon>Rhabditina</taxon>
        <taxon>Rhabditomorpha</taxon>
        <taxon>Rhabditoidea</taxon>
        <taxon>Rhabditidae</taxon>
        <taxon>Peloderinae</taxon>
        <taxon>Caenorhabditis</taxon>
    </lineage>
</organism>
<feature type="chain" id="PRO_0000419469" description="Ankyrin repeat and LEM domain-containing protein 2 homolog">
    <location>
        <begin position="1"/>
        <end position="603"/>
    </location>
</feature>
<feature type="transmembrane region" description="Helical; Signal-anchor for type III membrane protein" evidence="1">
    <location>
        <begin position="2"/>
        <end position="22"/>
    </location>
</feature>
<feature type="repeat" description="ANK 1">
    <location>
        <begin position="161"/>
        <end position="190"/>
    </location>
</feature>
<feature type="repeat" description="ANK 2">
    <location>
        <begin position="221"/>
        <end position="250"/>
    </location>
</feature>
<feature type="region of interest" description="Disordered" evidence="2">
    <location>
        <begin position="446"/>
        <end position="465"/>
    </location>
</feature>
<feature type="region of interest" description="Disordered" evidence="2">
    <location>
        <begin position="505"/>
        <end position="538"/>
    </location>
</feature>
<feature type="compositionally biased region" description="Acidic residues" evidence="2">
    <location>
        <begin position="456"/>
        <end position="465"/>
    </location>
</feature>
<feature type="splice variant" id="VSP_044191" description="In isoform b." evidence="4">
    <location>
        <begin position="1"/>
        <end position="23"/>
    </location>
</feature>
<feature type="mutagenesis site" description="In ax475 mutant; temperature-sensitive mutant. No visible phenotype at 16 degrees Celsius. At 25 degrees Celsius embryos die early during development due to defects in nuclear envelope reassembly." evidence="3">
    <original>A</original>
    <variation>V</variation>
    <location>
        <position position="229"/>
    </location>
</feature>
<protein>
    <recommendedName>
        <fullName>Ankyrin repeat and LEM domain-containing protein 2 homolog</fullName>
    </recommendedName>
    <alternativeName>
        <fullName>LEM domain-containing protein 4-like</fullName>
    </alternativeName>
</protein>
<gene>
    <name type="primary">lem-4</name>
    <name type="synonym">lem-4l</name>
    <name type="ORF">Y55F3BR.8</name>
</gene>
<evidence type="ECO:0000255" key="1"/>
<evidence type="ECO:0000256" key="2">
    <source>
        <dbReference type="SAM" id="MobiDB-lite"/>
    </source>
</evidence>
<evidence type="ECO:0000269" key="3">
    <source>
    </source>
</evidence>
<evidence type="ECO:0000305" key="4"/>
<reference key="1">
    <citation type="journal article" date="1998" name="Science">
        <title>Genome sequence of the nematode C. elegans: a platform for investigating biology.</title>
        <authorList>
            <consortium name="The C. elegans sequencing consortium"/>
        </authorList>
    </citation>
    <scope>NUCLEOTIDE SEQUENCE [LARGE SCALE GENOMIC DNA]</scope>
    <source>
        <strain>Bristol N2</strain>
    </source>
</reference>
<reference key="2">
    <citation type="journal article" date="2012" name="Cell">
        <title>Coordination of kinase and phosphatase activities by Lem4 enables nuclear envelope reassembly during mitosis.</title>
        <authorList>
            <person name="Asencio C."/>
            <person name="Davidson I.F."/>
            <person name="Santarella-Mellwig R."/>
            <person name="Ly-Hartig T.B."/>
            <person name="Mall M."/>
            <person name="Wallenfang M.R."/>
            <person name="Mattaj I.W."/>
            <person name="Gorjanacz M."/>
        </authorList>
    </citation>
    <scope>FUNCTION</scope>
    <scope>SUBCELLULAR LOCATION</scope>
    <scope>INTERACTION WITH BAF-1 AND PROTEIN PHOSPHATASE 2A</scope>
    <scope>MUTAGENESIS OF ALA-229</scope>
</reference>
<dbReference type="EMBL" id="FO080861">
    <property type="protein sequence ID" value="CCD67295.1"/>
    <property type="molecule type" value="Genomic_DNA"/>
</dbReference>
<dbReference type="EMBL" id="FO080861">
    <property type="protein sequence ID" value="CCD67296.1"/>
    <property type="molecule type" value="Genomic_DNA"/>
</dbReference>
<dbReference type="RefSeq" id="NP_001023514.1">
    <molecule id="H2KZB2-1"/>
    <property type="nucleotide sequence ID" value="NM_001028343.3"/>
</dbReference>
<dbReference type="RefSeq" id="NP_001023515.1">
    <molecule id="H2KZB2-2"/>
    <property type="nucleotide sequence ID" value="NM_001028344.4"/>
</dbReference>
<dbReference type="SMR" id="H2KZB2"/>
<dbReference type="BioGRID" id="42071">
    <property type="interactions" value="2"/>
</dbReference>
<dbReference type="FunCoup" id="H2KZB2">
    <property type="interactions" value="1048"/>
</dbReference>
<dbReference type="IntAct" id="H2KZB2">
    <property type="interactions" value="2"/>
</dbReference>
<dbReference type="STRING" id="6239.Y55F3BR.8a.1"/>
<dbReference type="PaxDb" id="6239-Y55F3BR.8a"/>
<dbReference type="PeptideAtlas" id="H2KZB2"/>
<dbReference type="EnsemblMetazoa" id="Y55F3BR.8a.1">
    <molecule id="H2KZB2-1"/>
    <property type="protein sequence ID" value="Y55F3BR.8a.1"/>
    <property type="gene ID" value="WBGene00021945"/>
</dbReference>
<dbReference type="EnsemblMetazoa" id="Y55F3BR.8b.1">
    <molecule id="H2KZB2-2"/>
    <property type="protein sequence ID" value="Y55F3BR.8b.1"/>
    <property type="gene ID" value="WBGene00021945"/>
</dbReference>
<dbReference type="GeneID" id="176911"/>
<dbReference type="KEGG" id="cel:CELE_Y55F3BR.8"/>
<dbReference type="UCSC" id="Y55F3BR.8a">
    <property type="organism name" value="c. elegans"/>
</dbReference>
<dbReference type="AGR" id="WB:WBGene00021945"/>
<dbReference type="CTD" id="176911"/>
<dbReference type="WormBase" id="Y55F3BR.8a">
    <molecule id="H2KZB2-1"/>
    <property type="protein sequence ID" value="CE31657"/>
    <property type="gene ID" value="WBGene00021945"/>
    <property type="gene designation" value="lem-4"/>
</dbReference>
<dbReference type="WormBase" id="Y55F3BR.8b">
    <molecule id="H2KZB2-2"/>
    <property type="protein sequence ID" value="CE37730"/>
    <property type="gene ID" value="WBGene00021945"/>
    <property type="gene designation" value="lem-4"/>
</dbReference>
<dbReference type="eggNOG" id="ENOG502QQ4Z">
    <property type="taxonomic scope" value="Eukaryota"/>
</dbReference>
<dbReference type="GeneTree" id="ENSGT00390000016767"/>
<dbReference type="HOGENOM" id="CLU_484166_0_0_1"/>
<dbReference type="InParanoid" id="H2KZB2"/>
<dbReference type="OMA" id="DCYLNMP"/>
<dbReference type="OrthoDB" id="7446186at2759"/>
<dbReference type="PhylomeDB" id="H2KZB2"/>
<dbReference type="Reactome" id="R-CEL-2995383">
    <property type="pathway name" value="Initiation of Nuclear Envelope (NE) Reformation"/>
</dbReference>
<dbReference type="PRO" id="PR:H2KZB2"/>
<dbReference type="Proteomes" id="UP000001940">
    <property type="component" value="Chromosome IV"/>
</dbReference>
<dbReference type="Bgee" id="WBGene00021945">
    <property type="expression patterns" value="Expressed in germ line (C elegans) and 4 other cell types or tissues"/>
</dbReference>
<dbReference type="GO" id="GO:0005783">
    <property type="term" value="C:endoplasmic reticulum"/>
    <property type="evidence" value="ECO:0000318"/>
    <property type="project" value="GO_Central"/>
</dbReference>
<dbReference type="GO" id="GO:0005635">
    <property type="term" value="C:nuclear envelope"/>
    <property type="evidence" value="ECO:0000314"/>
    <property type="project" value="UniProtKB"/>
</dbReference>
<dbReference type="GO" id="GO:0031965">
    <property type="term" value="C:nuclear membrane"/>
    <property type="evidence" value="ECO:0007669"/>
    <property type="project" value="UniProtKB-SubCell"/>
</dbReference>
<dbReference type="GO" id="GO:0004860">
    <property type="term" value="F:protein kinase inhibitor activity"/>
    <property type="evidence" value="ECO:0000314"/>
    <property type="project" value="UniProtKB"/>
</dbReference>
<dbReference type="GO" id="GO:0051721">
    <property type="term" value="F:protein phosphatase 2A binding"/>
    <property type="evidence" value="ECO:0000314"/>
    <property type="project" value="UniProtKB"/>
</dbReference>
<dbReference type="GO" id="GO:0051301">
    <property type="term" value="P:cell division"/>
    <property type="evidence" value="ECO:0007669"/>
    <property type="project" value="UniProtKB-KW"/>
</dbReference>
<dbReference type="GO" id="GO:0007084">
    <property type="term" value="P:mitotic nuclear membrane reassembly"/>
    <property type="evidence" value="ECO:0000315"/>
    <property type="project" value="UniProtKB"/>
</dbReference>
<dbReference type="GO" id="GO:0042326">
    <property type="term" value="P:negative regulation of phosphorylation"/>
    <property type="evidence" value="ECO:0000314"/>
    <property type="project" value="UniProtKB"/>
</dbReference>
<dbReference type="FunFam" id="1.25.40.20:FF:000590">
    <property type="entry name" value="Protein CBG13985"/>
    <property type="match status" value="1"/>
</dbReference>
<dbReference type="Gene3D" id="1.25.40.20">
    <property type="entry name" value="Ankyrin repeat-containing domain"/>
    <property type="match status" value="1"/>
</dbReference>
<dbReference type="InterPro" id="IPR056237">
    <property type="entry name" value="ANKLE2_3rd"/>
</dbReference>
<dbReference type="InterPro" id="IPR002110">
    <property type="entry name" value="Ankyrin_rpt"/>
</dbReference>
<dbReference type="InterPro" id="IPR036770">
    <property type="entry name" value="Ankyrin_rpt-contain_sf"/>
</dbReference>
<dbReference type="PANTHER" id="PTHR12349">
    <property type="entry name" value="ANKYRIN REPEAT AND LEM DOMAIN-CONTAINING PROTEIN 2"/>
    <property type="match status" value="1"/>
</dbReference>
<dbReference type="PANTHER" id="PTHR12349:SF4">
    <property type="entry name" value="ANKYRIN REPEAT AND LEM DOMAIN-CONTAINING PROTEIN 2"/>
    <property type="match status" value="1"/>
</dbReference>
<dbReference type="Pfam" id="PF24567">
    <property type="entry name" value="ANKLE2_3rd"/>
    <property type="match status" value="1"/>
</dbReference>
<dbReference type="SMART" id="SM00248">
    <property type="entry name" value="ANK"/>
    <property type="match status" value="2"/>
</dbReference>
<dbReference type="SUPFAM" id="SSF48403">
    <property type="entry name" value="Ankyrin repeat"/>
    <property type="match status" value="1"/>
</dbReference>
<dbReference type="PROSITE" id="PS50297">
    <property type="entry name" value="ANK_REP_REGION"/>
    <property type="match status" value="1"/>
</dbReference>
<dbReference type="PROSITE" id="PS50088">
    <property type="entry name" value="ANK_REPEAT"/>
    <property type="match status" value="1"/>
</dbReference>
<comment type="function">
    <text evidence="3">Involved in mitotic nuclear envelope reassembly by promoting dephosphorylation of baf-1 during mitotic exit. Coordinates the control of baf-1 dephosphorylation by inhibiting VRK1 kinase and promoting dephosphorylation of baf-1 by protein phosphatase 2A (PP2A), thereby facilitating nuclear envelope assembly. It is unclear whether it acts as a real PP2A regulatory subunit or whether it is involved in recruitment of the PP2A complex.</text>
</comment>
<comment type="subunit">
    <text evidence="3">Interacts with baf-1. Interacts with protein phosphatase 2A (PP2A) components.</text>
</comment>
<comment type="interaction">
    <interactant intactId="EBI-6258914">
        <id>H2KZB2</id>
    </interactant>
    <interactant intactId="EBI-2414048">
        <id>Q19848</id>
        <label>vrk-1</label>
    </interactant>
    <organismsDiffer>false</organismsDiffer>
    <experiments>2</experiments>
</comment>
<comment type="subcellular location">
    <subcellularLocation>
        <location evidence="3">Nucleus membrane</location>
        <topology evidence="3">Single-pass membrane protein</topology>
    </subcellularLocation>
</comment>
<comment type="alternative products">
    <event type="alternative splicing"/>
    <isoform>
        <id>H2KZB2-1</id>
        <name>a</name>
        <sequence type="displayed"/>
    </isoform>
    <isoform>
        <id>H2KZB2-2</id>
        <name>b</name>
        <sequence type="described" ref="VSP_044191"/>
    </isoform>
</comment>
<comment type="similarity">
    <text evidence="4">Belongs to the ANKLE2 family.</text>
</comment>
<name>ANKL2_CAEEL</name>
<proteinExistence type="evidence at protein level"/>